<organism>
    <name type="scientific">Thermus thermophilus (strain ATCC 27634 / DSM 579 / HB8)</name>
    <dbReference type="NCBI Taxonomy" id="300852"/>
    <lineage>
        <taxon>Bacteria</taxon>
        <taxon>Thermotogati</taxon>
        <taxon>Deinococcota</taxon>
        <taxon>Deinococci</taxon>
        <taxon>Thermales</taxon>
        <taxon>Thermaceae</taxon>
        <taxon>Thermus</taxon>
    </lineage>
</organism>
<evidence type="ECO:0000255" key="1">
    <source>
        <dbReference type="HAMAP-Rule" id="MF_00076"/>
    </source>
</evidence>
<protein>
    <recommendedName>
        <fullName evidence="1">Imidazoleglycerol-phosphate dehydratase</fullName>
        <shortName evidence="1">IGPD</shortName>
        <ecNumber evidence="1">4.2.1.19</ecNumber>
    </recommendedName>
</protein>
<sequence length="194" mass="21392">MREATVERATAETWVWLRLGLDGPTGGKVDTGLPFLDHMLLQLQRHGRFLLEVEARGDLEVDVHHLVEDVGIALGMALKEALGDGVGLERYAEAFAPMDETLVLCVLDLSGRPHLEFRPEAWPVVGEAGGVNHYHLREFLRGLVNHGRLTLHLRLLSGREAHHVVEASFKALARALHKATRRTGEGVPSTKGVL</sequence>
<accession>Q5SL64</accession>
<name>HIS7_THET8</name>
<feature type="chain" id="PRO_1000010368" description="Imidazoleglycerol-phosphate dehydratase">
    <location>
        <begin position="1"/>
        <end position="194"/>
    </location>
</feature>
<gene>
    <name evidence="1" type="primary">hisB</name>
    <name type="ordered locus">TTHA0429</name>
</gene>
<reference key="1">
    <citation type="submission" date="2004-11" db="EMBL/GenBank/DDBJ databases">
        <title>Complete genome sequence of Thermus thermophilus HB8.</title>
        <authorList>
            <person name="Masui R."/>
            <person name="Kurokawa K."/>
            <person name="Nakagawa N."/>
            <person name="Tokunaga F."/>
            <person name="Koyama Y."/>
            <person name="Shibata T."/>
            <person name="Oshima T."/>
            <person name="Yokoyama S."/>
            <person name="Yasunaga T."/>
            <person name="Kuramitsu S."/>
        </authorList>
    </citation>
    <scope>NUCLEOTIDE SEQUENCE [LARGE SCALE GENOMIC DNA]</scope>
    <source>
        <strain>ATCC 27634 / DSM 579 / HB8</strain>
    </source>
</reference>
<comment type="catalytic activity">
    <reaction evidence="1">
        <text>D-erythro-1-(imidazol-4-yl)glycerol 3-phosphate = 3-(imidazol-4-yl)-2-oxopropyl phosphate + H2O</text>
        <dbReference type="Rhea" id="RHEA:11040"/>
        <dbReference type="ChEBI" id="CHEBI:15377"/>
        <dbReference type="ChEBI" id="CHEBI:57766"/>
        <dbReference type="ChEBI" id="CHEBI:58278"/>
        <dbReference type="EC" id="4.2.1.19"/>
    </reaction>
</comment>
<comment type="pathway">
    <text evidence="1">Amino-acid biosynthesis; L-histidine biosynthesis; L-histidine from 5-phospho-alpha-D-ribose 1-diphosphate: step 6/9.</text>
</comment>
<comment type="subcellular location">
    <subcellularLocation>
        <location evidence="1">Cytoplasm</location>
    </subcellularLocation>
</comment>
<comment type="similarity">
    <text evidence="1">Belongs to the imidazoleglycerol-phosphate dehydratase family.</text>
</comment>
<proteinExistence type="inferred from homology"/>
<dbReference type="EC" id="4.2.1.19" evidence="1"/>
<dbReference type="EMBL" id="AP008226">
    <property type="protein sequence ID" value="BAD70252.1"/>
    <property type="molecule type" value="Genomic_DNA"/>
</dbReference>
<dbReference type="RefSeq" id="WP_011227929.1">
    <property type="nucleotide sequence ID" value="NC_006461.1"/>
</dbReference>
<dbReference type="RefSeq" id="YP_143695.1">
    <property type="nucleotide sequence ID" value="NC_006461.1"/>
</dbReference>
<dbReference type="SMR" id="Q5SL64"/>
<dbReference type="EnsemblBacteria" id="BAD70252">
    <property type="protein sequence ID" value="BAD70252"/>
    <property type="gene ID" value="BAD70252"/>
</dbReference>
<dbReference type="GeneID" id="3169653"/>
<dbReference type="KEGG" id="ttj:TTHA0429"/>
<dbReference type="PATRIC" id="fig|300852.9.peg.429"/>
<dbReference type="eggNOG" id="COG0131">
    <property type="taxonomic scope" value="Bacteria"/>
</dbReference>
<dbReference type="HOGENOM" id="CLU_044308_3_0_0"/>
<dbReference type="PhylomeDB" id="Q5SL64"/>
<dbReference type="UniPathway" id="UPA00031">
    <property type="reaction ID" value="UER00011"/>
</dbReference>
<dbReference type="Proteomes" id="UP000000532">
    <property type="component" value="Chromosome"/>
</dbReference>
<dbReference type="GO" id="GO:0005737">
    <property type="term" value="C:cytoplasm"/>
    <property type="evidence" value="ECO:0007669"/>
    <property type="project" value="UniProtKB-SubCell"/>
</dbReference>
<dbReference type="GO" id="GO:0004424">
    <property type="term" value="F:imidazoleglycerol-phosphate dehydratase activity"/>
    <property type="evidence" value="ECO:0007669"/>
    <property type="project" value="UniProtKB-UniRule"/>
</dbReference>
<dbReference type="GO" id="GO:0000105">
    <property type="term" value="P:L-histidine biosynthetic process"/>
    <property type="evidence" value="ECO:0007669"/>
    <property type="project" value="UniProtKB-UniRule"/>
</dbReference>
<dbReference type="CDD" id="cd07914">
    <property type="entry name" value="IGPD"/>
    <property type="match status" value="1"/>
</dbReference>
<dbReference type="FunFam" id="3.30.230.40:FF:000001">
    <property type="entry name" value="Imidazoleglycerol-phosphate dehydratase HisB"/>
    <property type="match status" value="1"/>
</dbReference>
<dbReference type="FunFam" id="3.30.230.40:FF:000003">
    <property type="entry name" value="Imidazoleglycerol-phosphate dehydratase HisB"/>
    <property type="match status" value="1"/>
</dbReference>
<dbReference type="Gene3D" id="3.30.230.40">
    <property type="entry name" value="Imidazole glycerol phosphate dehydratase, domain 1"/>
    <property type="match status" value="2"/>
</dbReference>
<dbReference type="HAMAP" id="MF_00076">
    <property type="entry name" value="HisB"/>
    <property type="match status" value="1"/>
</dbReference>
<dbReference type="InterPro" id="IPR038494">
    <property type="entry name" value="IGPD_sf"/>
</dbReference>
<dbReference type="InterPro" id="IPR000807">
    <property type="entry name" value="ImidazoleglycerolP_deHydtase"/>
</dbReference>
<dbReference type="InterPro" id="IPR020565">
    <property type="entry name" value="ImidazoleglycerP_deHydtase_CS"/>
</dbReference>
<dbReference type="InterPro" id="IPR020568">
    <property type="entry name" value="Ribosomal_Su5_D2-typ_SF"/>
</dbReference>
<dbReference type="NCBIfam" id="NF002114">
    <property type="entry name" value="PRK00951.2-4"/>
    <property type="match status" value="1"/>
</dbReference>
<dbReference type="PANTHER" id="PTHR23133:SF2">
    <property type="entry name" value="IMIDAZOLEGLYCEROL-PHOSPHATE DEHYDRATASE"/>
    <property type="match status" value="1"/>
</dbReference>
<dbReference type="PANTHER" id="PTHR23133">
    <property type="entry name" value="IMIDAZOLEGLYCEROL-PHOSPHATE DEHYDRATASE HIS7"/>
    <property type="match status" value="1"/>
</dbReference>
<dbReference type="Pfam" id="PF00475">
    <property type="entry name" value="IGPD"/>
    <property type="match status" value="1"/>
</dbReference>
<dbReference type="SUPFAM" id="SSF54211">
    <property type="entry name" value="Ribosomal protein S5 domain 2-like"/>
    <property type="match status" value="2"/>
</dbReference>
<dbReference type="PROSITE" id="PS00954">
    <property type="entry name" value="IGP_DEHYDRATASE_1"/>
    <property type="match status" value="1"/>
</dbReference>
<dbReference type="PROSITE" id="PS00955">
    <property type="entry name" value="IGP_DEHYDRATASE_2"/>
    <property type="match status" value="1"/>
</dbReference>
<keyword id="KW-0028">Amino-acid biosynthesis</keyword>
<keyword id="KW-0963">Cytoplasm</keyword>
<keyword id="KW-0368">Histidine biosynthesis</keyword>
<keyword id="KW-0456">Lyase</keyword>
<keyword id="KW-1185">Reference proteome</keyword>